<evidence type="ECO:0000255" key="1">
    <source>
        <dbReference type="PROSITE-ProRule" id="PRU01020"/>
    </source>
</evidence>
<evidence type="ECO:0000269" key="2">
    <source>
    </source>
</evidence>
<protein>
    <recommendedName>
        <fullName>TRIBOA-glucoside O-methyltransferase BX7</fullName>
        <ecNumber>2.1.1.241</ecNumber>
    </recommendedName>
    <alternativeName>
        <fullName>2,4,7-trihydroxy-1,4-benzoxazin-3-one-glucoside 7-O-methyltransferase</fullName>
    </alternativeName>
    <alternativeName>
        <fullName>Protein BENZOXAZINONE SYNTHESIS 7</fullName>
    </alternativeName>
</protein>
<keyword id="KW-0903">Direct protein sequencing</keyword>
<keyword id="KW-0489">Methyltransferase</keyword>
<keyword id="KW-1185">Reference proteome</keyword>
<keyword id="KW-0949">S-adenosyl-L-methionine</keyword>
<keyword id="KW-0808">Transferase</keyword>
<gene>
    <name type="primary">BX7</name>
    <name type="synonym">ZRP4</name>
</gene>
<dbReference type="EC" id="2.1.1.241"/>
<dbReference type="EMBL" id="EU192149">
    <property type="protein sequence ID" value="ABY59051.1"/>
    <property type="molecule type" value="mRNA"/>
</dbReference>
<dbReference type="RefSeq" id="NP_001120719.1">
    <property type="nucleotide sequence ID" value="NM_001127247.1"/>
</dbReference>
<dbReference type="SMR" id="B1P123"/>
<dbReference type="STRING" id="4577.B1P123"/>
<dbReference type="GeneID" id="100147731"/>
<dbReference type="KEGG" id="zma:100147731"/>
<dbReference type="MaizeGDB" id="1204241"/>
<dbReference type="InParanoid" id="B1P123"/>
<dbReference type="OrthoDB" id="675215at2759"/>
<dbReference type="BioCyc" id="MetaCyc:MONOMER-16976"/>
<dbReference type="BRENDA" id="2.1.1.241">
    <property type="organism ID" value="6752"/>
</dbReference>
<dbReference type="SABIO-RK" id="B1P123"/>
<dbReference type="Proteomes" id="UP000007305">
    <property type="component" value="Unplaced"/>
</dbReference>
<dbReference type="ExpressionAtlas" id="B1P123">
    <property type="expression patterns" value="baseline and differential"/>
</dbReference>
<dbReference type="GO" id="GO:0008171">
    <property type="term" value="F:O-methyltransferase activity"/>
    <property type="evidence" value="ECO:0000318"/>
    <property type="project" value="GO_Central"/>
</dbReference>
<dbReference type="GO" id="GO:0046983">
    <property type="term" value="F:protein dimerization activity"/>
    <property type="evidence" value="ECO:0007669"/>
    <property type="project" value="InterPro"/>
</dbReference>
<dbReference type="GO" id="GO:0008757">
    <property type="term" value="F:S-adenosylmethionine-dependent methyltransferase activity"/>
    <property type="evidence" value="ECO:0000318"/>
    <property type="project" value="GO_Central"/>
</dbReference>
<dbReference type="GO" id="GO:0102718">
    <property type="term" value="F:TRIBOA-glucoside methyltransferase activity"/>
    <property type="evidence" value="ECO:0007669"/>
    <property type="project" value="UniProtKB-EC"/>
</dbReference>
<dbReference type="GO" id="GO:0009058">
    <property type="term" value="P:biosynthetic process"/>
    <property type="evidence" value="ECO:0000318"/>
    <property type="project" value="GO_Central"/>
</dbReference>
<dbReference type="GO" id="GO:0032259">
    <property type="term" value="P:methylation"/>
    <property type="evidence" value="ECO:0000318"/>
    <property type="project" value="GO_Central"/>
</dbReference>
<dbReference type="FunFam" id="1.10.10.10:FF:000292">
    <property type="entry name" value="O-methyltransferase ZRP4"/>
    <property type="match status" value="1"/>
</dbReference>
<dbReference type="FunFam" id="3.40.50.150:FF:000206">
    <property type="entry name" value="O-methyltransferase ZRP4"/>
    <property type="match status" value="1"/>
</dbReference>
<dbReference type="Gene3D" id="3.40.50.150">
    <property type="entry name" value="Vaccinia Virus protein VP39"/>
    <property type="match status" value="1"/>
</dbReference>
<dbReference type="Gene3D" id="1.10.10.10">
    <property type="entry name" value="Winged helix-like DNA-binding domain superfamily/Winged helix DNA-binding domain"/>
    <property type="match status" value="1"/>
</dbReference>
<dbReference type="InterPro" id="IPR016461">
    <property type="entry name" value="COMT-like"/>
</dbReference>
<dbReference type="InterPro" id="IPR001077">
    <property type="entry name" value="O_MeTrfase_dom"/>
</dbReference>
<dbReference type="InterPro" id="IPR012967">
    <property type="entry name" value="Plant_O-MeTrfase_dimerisation"/>
</dbReference>
<dbReference type="InterPro" id="IPR029063">
    <property type="entry name" value="SAM-dependent_MTases_sf"/>
</dbReference>
<dbReference type="InterPro" id="IPR036388">
    <property type="entry name" value="WH-like_DNA-bd_sf"/>
</dbReference>
<dbReference type="InterPro" id="IPR036390">
    <property type="entry name" value="WH_DNA-bd_sf"/>
</dbReference>
<dbReference type="PANTHER" id="PTHR11746">
    <property type="entry name" value="O-METHYLTRANSFERASE"/>
    <property type="match status" value="1"/>
</dbReference>
<dbReference type="Pfam" id="PF08100">
    <property type="entry name" value="Dimerisation"/>
    <property type="match status" value="1"/>
</dbReference>
<dbReference type="Pfam" id="PF00891">
    <property type="entry name" value="Methyltransf_2"/>
    <property type="match status" value="1"/>
</dbReference>
<dbReference type="PIRSF" id="PIRSF005739">
    <property type="entry name" value="O-mtase"/>
    <property type="match status" value="1"/>
</dbReference>
<dbReference type="SUPFAM" id="SSF53335">
    <property type="entry name" value="S-adenosyl-L-methionine-dependent methyltransferases"/>
    <property type="match status" value="1"/>
</dbReference>
<dbReference type="SUPFAM" id="SSF46785">
    <property type="entry name" value="Winged helix' DNA-binding domain"/>
    <property type="match status" value="1"/>
</dbReference>
<dbReference type="PROSITE" id="PS51683">
    <property type="entry name" value="SAM_OMT_II"/>
    <property type="match status" value="1"/>
</dbReference>
<comment type="function">
    <text evidence="2">O-methyltransferase involved in the benzoxazinoid glucoside biosynthesis. Can use 2,4,7-trihydroxy-2H-1,4-benzoxazin-3(4H)-one 2-D-glucoside (TRIBOA-glucoside) as substrate, but not aglucone TRIBOA, caffeic acid, ferulic acid, apigenin or quercetin.</text>
</comment>
<comment type="catalytic activity">
    <reaction evidence="2">
        <text>TRIBOA beta-D-glucoside + S-adenosyl-L-methionine = DIMBOA beta-D-glucoside + S-adenosyl-L-homocysteine + H(+)</text>
        <dbReference type="Rhea" id="RHEA:32099"/>
        <dbReference type="ChEBI" id="CHEBI:15378"/>
        <dbReference type="ChEBI" id="CHEBI:37573"/>
        <dbReference type="ChEBI" id="CHEBI:57856"/>
        <dbReference type="ChEBI" id="CHEBI:59789"/>
        <dbReference type="ChEBI" id="CHEBI:63671"/>
        <dbReference type="EC" id="2.1.1.241"/>
    </reaction>
</comment>
<comment type="biophysicochemical properties">
    <kinetics>
        <KM evidence="2">272 uM for 2,4,7-trihydroxyy-2H-1,4-benzoxazin-3(4H)-one 2-D-glucoside (TRIBOA-glucoside)</KM>
        <Vmax evidence="2">6.79 umol/sec/g enzyme with TRIBOA-glucoside as substrate</Vmax>
        <text>kcat is 0.249 sec(-1) for TRIBOA-glucoside.</text>
    </kinetics>
    <phDependence>
        <text evidence="2">Optimum pH is 7.0.</text>
    </phDependence>
</comment>
<comment type="tissue specificity">
    <text evidence="2">Expressed in seedlings and newly formed crown roots. Highest expression in the scutellar node. Low to non detectable levels in cob, tassel and mature organs like husk or leaves.</text>
</comment>
<comment type="developmental stage">
    <text evidence="2">Peak of expression in 3- and 4-day-old seedlings.</text>
</comment>
<comment type="similarity">
    <text evidence="1">Belongs to the class I-like SAM-binding methyltransferase superfamily. Cation-independent O-methyltransferase family. COMT subfamily.</text>
</comment>
<sequence length="386" mass="42131">MGHQAQHGTDDTEELLAAHRQLWCHALGYVKSMALKCALDLRIPDTIDRCGGSATLGELLAASEISASNHDYLRRVMRTLTAMRIFAASHDPAKADDAAAISYQLTPASRLLVSSSSSVDDAAGASKENTTTPSILPNIAHLVRPNTISLLFSMGEWMKDESAASVSLYETVHRQGMWACVEDDAANRASFYESMDADTRLVMQAVVRRCPHVFDGIKSLVDVGGGRGTAAAAVVAAFPHIQRCTVMDLPHVVAEAPAGTAGLSFHGGDMFEHIPSADALMLKWILHDWDEDKCIKIMERCKEAIGGKEAGGKVIIIDTVLGSRADDDDDDKTCRETYVLDLHILSFVNGAEREEHEWRRIFLAAGFRDYKITHTRGIPSIIEVFP</sequence>
<name>BX7_MAIZE</name>
<organism>
    <name type="scientific">Zea mays</name>
    <name type="common">Maize</name>
    <dbReference type="NCBI Taxonomy" id="4577"/>
    <lineage>
        <taxon>Eukaryota</taxon>
        <taxon>Viridiplantae</taxon>
        <taxon>Streptophyta</taxon>
        <taxon>Embryophyta</taxon>
        <taxon>Tracheophyta</taxon>
        <taxon>Spermatophyta</taxon>
        <taxon>Magnoliopsida</taxon>
        <taxon>Liliopsida</taxon>
        <taxon>Poales</taxon>
        <taxon>Poaceae</taxon>
        <taxon>PACMAD clade</taxon>
        <taxon>Panicoideae</taxon>
        <taxon>Andropogonodae</taxon>
        <taxon>Andropogoneae</taxon>
        <taxon>Tripsacinae</taxon>
        <taxon>Zea</taxon>
    </lineage>
</organism>
<proteinExistence type="evidence at protein level"/>
<feature type="chain" id="PRO_0000415305" description="TRIBOA-glucoside O-methyltransferase BX7">
    <location>
        <begin position="1"/>
        <end position="386"/>
    </location>
</feature>
<feature type="active site" description="Proton acceptor" evidence="1">
    <location>
        <position position="287"/>
    </location>
</feature>
<feature type="binding site" evidence="1">
    <location>
        <position position="224"/>
    </location>
    <ligand>
        <name>S-adenosyl-L-methionine</name>
        <dbReference type="ChEBI" id="CHEBI:59789"/>
    </ligand>
</feature>
<feature type="binding site" evidence="1">
    <location>
        <position position="248"/>
    </location>
    <ligand>
        <name>S-adenosyl-L-methionine</name>
        <dbReference type="ChEBI" id="CHEBI:59789"/>
    </ligand>
</feature>
<feature type="binding site" evidence="1">
    <location>
        <position position="270"/>
    </location>
    <ligand>
        <name>S-adenosyl-L-methionine</name>
        <dbReference type="ChEBI" id="CHEBI:59789"/>
    </ligand>
</feature>
<feature type="binding site" evidence="1">
    <location>
        <position position="283"/>
    </location>
    <ligand>
        <name>S-adenosyl-L-methionine</name>
        <dbReference type="ChEBI" id="CHEBI:59789"/>
    </ligand>
</feature>
<reference key="1">
    <citation type="journal article" date="2008" name="Plant Physiol.">
        <title>Elucidation of the Final Reactions of DIMBOA-Glucoside Biosynthesis in Maize: Characterization of Bx6 and Bx7.</title>
        <authorList>
            <person name="Jonczyk R."/>
            <person name="Schmidt H."/>
            <person name="Osterrieder A."/>
            <person name="Fiesselmann A."/>
            <person name="Schullehner K."/>
            <person name="Haslbeck M."/>
            <person name="Sicker D."/>
            <person name="Hofmann D."/>
            <person name="Yalpani N."/>
            <person name="Simmons C."/>
            <person name="Frey M."/>
            <person name="Gierl A."/>
        </authorList>
    </citation>
    <scope>NUCLEOTIDE SEQUENCE [MRNA]</scope>
    <scope>PARTIAL PROTEIN SEQUENCE</scope>
    <scope>FUNCTION</scope>
    <scope>CATALYTIC ACTIVITY</scope>
    <scope>BIOPHYSICOCHEMICAL PROPERTIES</scope>
    <scope>DEVELOPMENTAL STAGE</scope>
    <scope>TISSUE SPECIFICITY</scope>
    <source>
        <strain>cv. CI31A</strain>
    </source>
</reference>
<accession>B1P123</accession>